<dbReference type="EC" id="1.-.-.-" evidence="2"/>
<dbReference type="EMBL" id="CM000586">
    <property type="protein sequence ID" value="EWG52298.1"/>
    <property type="molecule type" value="Genomic_DNA"/>
</dbReference>
<dbReference type="RefSeq" id="XP_018758489.1">
    <property type="nucleotide sequence ID" value="XM_018900239.1"/>
</dbReference>
<dbReference type="SMR" id="W7MLD1"/>
<dbReference type="STRING" id="334819.W7MLD1"/>
<dbReference type="GlyCosmos" id="W7MLD1">
    <property type="glycosylation" value="2 sites, No reported glycans"/>
</dbReference>
<dbReference type="EnsemblFungi" id="FVEG_11079T0">
    <property type="protein sequence ID" value="FVEG_11079T0"/>
    <property type="gene ID" value="FVEG_11079"/>
</dbReference>
<dbReference type="GeneID" id="30068615"/>
<dbReference type="KEGG" id="fvr:FVEG_11079"/>
<dbReference type="VEuPathDB" id="FungiDB:FVEG_11079"/>
<dbReference type="eggNOG" id="KOG0158">
    <property type="taxonomic scope" value="Eukaryota"/>
</dbReference>
<dbReference type="HOGENOM" id="CLU_001570_4_1_1"/>
<dbReference type="OMA" id="FALQEMH"/>
<dbReference type="OrthoDB" id="110528at110618"/>
<dbReference type="Proteomes" id="UP000009096">
    <property type="component" value="Chromosome 9"/>
</dbReference>
<dbReference type="GO" id="GO:0016020">
    <property type="term" value="C:membrane"/>
    <property type="evidence" value="ECO:0007669"/>
    <property type="project" value="UniProtKB-SubCell"/>
</dbReference>
<dbReference type="GO" id="GO:0020037">
    <property type="term" value="F:heme binding"/>
    <property type="evidence" value="ECO:0007669"/>
    <property type="project" value="InterPro"/>
</dbReference>
<dbReference type="GO" id="GO:0005506">
    <property type="term" value="F:iron ion binding"/>
    <property type="evidence" value="ECO:0007669"/>
    <property type="project" value="InterPro"/>
</dbReference>
<dbReference type="GO" id="GO:0004497">
    <property type="term" value="F:monooxygenase activity"/>
    <property type="evidence" value="ECO:0007669"/>
    <property type="project" value="UniProtKB-KW"/>
</dbReference>
<dbReference type="GO" id="GO:0016705">
    <property type="term" value="F:oxidoreductase activity, acting on paired donors, with incorporation or reduction of molecular oxygen"/>
    <property type="evidence" value="ECO:0007669"/>
    <property type="project" value="InterPro"/>
</dbReference>
<dbReference type="Gene3D" id="1.10.630.10">
    <property type="entry name" value="Cytochrome P450"/>
    <property type="match status" value="1"/>
</dbReference>
<dbReference type="InterPro" id="IPR001128">
    <property type="entry name" value="Cyt_P450"/>
</dbReference>
<dbReference type="InterPro" id="IPR017972">
    <property type="entry name" value="Cyt_P450_CS"/>
</dbReference>
<dbReference type="InterPro" id="IPR002401">
    <property type="entry name" value="Cyt_P450_E_grp-I"/>
</dbReference>
<dbReference type="InterPro" id="IPR036396">
    <property type="entry name" value="Cyt_P450_sf"/>
</dbReference>
<dbReference type="InterPro" id="IPR050121">
    <property type="entry name" value="Cytochrome_P450_monoxygenase"/>
</dbReference>
<dbReference type="PANTHER" id="PTHR24305">
    <property type="entry name" value="CYTOCHROME P450"/>
    <property type="match status" value="1"/>
</dbReference>
<dbReference type="PANTHER" id="PTHR24305:SF166">
    <property type="entry name" value="CYTOCHROME P450 12A4, MITOCHONDRIAL-RELATED"/>
    <property type="match status" value="1"/>
</dbReference>
<dbReference type="Pfam" id="PF00067">
    <property type="entry name" value="p450"/>
    <property type="match status" value="1"/>
</dbReference>
<dbReference type="PRINTS" id="PR00463">
    <property type="entry name" value="EP450I"/>
</dbReference>
<dbReference type="PRINTS" id="PR00385">
    <property type="entry name" value="P450"/>
</dbReference>
<dbReference type="SUPFAM" id="SSF48264">
    <property type="entry name" value="Cytochrome P450"/>
    <property type="match status" value="1"/>
</dbReference>
<dbReference type="PROSITE" id="PS00086">
    <property type="entry name" value="CYTOCHROME_P450"/>
    <property type="match status" value="1"/>
</dbReference>
<proteinExistence type="inferred from homology"/>
<accession>W7MLD1</accession>
<comment type="function">
    <text evidence="2 5 6">Cytochrome P450 monooxygenase; part of the gene cluster that mediates the biosynthesis of the mycotoxin fusarin C (PubMed:17121404, PubMed:22652150). Within the cluster, FUS1, FUS2, FUS8 and FUS9 are sufficient for fusarin production (By similarity). The roles of the other FUS members are yet undetermined (By similarity). The fusarin C synthetase FUS1 is responsible for the condensation of one acetyl-coenzyme A (CoA) unit with six malonyl-CoA units and the amide linkage of the arising heptaketide and homoserine, subsequently releasing the first intermediate, prefusarin, as an alcohol with an open ring structure (PubMed:17121404). The cytochrome P450 monooxygenase FUS8 participates in multiple oxidation processes at carbon C-20 and is able to use the FUS1 product as substrate, resulting in formation of 20-hydroxy-prefusarin (By similarity). This reaction seems to be essential before the 2-pyrrolidone ring closure can be catalyzed by FUS2, generating 20-hydroxy-fusarin (By similarity). FUS8 is able to further oxidizes carbon C-20 after ring closure, resulting in the formation of carboxy-fusarin C (By similarity). As the last step, FUS9 methylates the hydroxyl group at C-21 to generate fusarin C (By similarity). Fusarin C can then rearrange to epi-fusarin C, the (z)-isomers, and fusarin A and fusarin D (By similarity).</text>
</comment>
<comment type="cofactor">
    <cofactor evidence="1">
        <name>heme</name>
        <dbReference type="ChEBI" id="CHEBI:30413"/>
    </cofactor>
</comment>
<comment type="pathway">
    <text evidence="2 9">Mycotoxin biosynthesis.</text>
</comment>
<comment type="subcellular location">
    <subcellularLocation>
        <location evidence="3">Membrane</location>
        <topology evidence="3">Single-pass membrane protein</topology>
    </subcellularLocation>
</comment>
<comment type="similarity">
    <text evidence="8">Belongs to the cytochrome P450 family.</text>
</comment>
<feature type="chain" id="PRO_0000437364" description="Cytochrome P450 monooxygenase FUS8">
    <location>
        <begin position="1"/>
        <end position="514"/>
    </location>
</feature>
<feature type="transmembrane region" description="Helical" evidence="3">
    <location>
        <begin position="28"/>
        <end position="48"/>
    </location>
</feature>
<feature type="binding site" description="axial binding residue" evidence="1">
    <location>
        <position position="460"/>
    </location>
    <ligand>
        <name>heme</name>
        <dbReference type="ChEBI" id="CHEBI:30413"/>
    </ligand>
    <ligandPart>
        <name>Fe</name>
        <dbReference type="ChEBI" id="CHEBI:18248"/>
    </ligandPart>
</feature>
<feature type="glycosylation site" description="N-linked (GlcNAc...) asparagine" evidence="4">
    <location>
        <position position="225"/>
    </location>
</feature>
<feature type="glycosylation site" description="N-linked (GlcNAc...) asparagine" evidence="4">
    <location>
        <position position="443"/>
    </location>
</feature>
<keyword id="KW-0325">Glycoprotein</keyword>
<keyword id="KW-0349">Heme</keyword>
<keyword id="KW-0408">Iron</keyword>
<keyword id="KW-0472">Membrane</keyword>
<keyword id="KW-0479">Metal-binding</keyword>
<keyword id="KW-0503">Monooxygenase</keyword>
<keyword id="KW-0560">Oxidoreductase</keyword>
<keyword id="KW-1185">Reference proteome</keyword>
<keyword id="KW-0812">Transmembrane</keyword>
<keyword id="KW-1133">Transmembrane helix</keyword>
<name>FUS8_GIBM7</name>
<reference key="1">
    <citation type="journal article" date="2010" name="Nature">
        <title>Comparative genomics reveals mobile pathogenicity chromosomes in Fusarium.</title>
        <authorList>
            <person name="Ma L.-J."/>
            <person name="van der Does H.C."/>
            <person name="Borkovich K.A."/>
            <person name="Coleman J.J."/>
            <person name="Daboussi M.-J."/>
            <person name="Di Pietro A."/>
            <person name="Dufresne M."/>
            <person name="Freitag M."/>
            <person name="Grabherr M."/>
            <person name="Henrissat B."/>
            <person name="Houterman P.M."/>
            <person name="Kang S."/>
            <person name="Shim W.-B."/>
            <person name="Woloshuk C."/>
            <person name="Xie X."/>
            <person name="Xu J.-R."/>
            <person name="Antoniw J."/>
            <person name="Baker S.E."/>
            <person name="Bluhm B.H."/>
            <person name="Breakspear A."/>
            <person name="Brown D.W."/>
            <person name="Butchko R.A.E."/>
            <person name="Chapman S."/>
            <person name="Coulson R."/>
            <person name="Coutinho P.M."/>
            <person name="Danchin E.G.J."/>
            <person name="Diener A."/>
            <person name="Gale L.R."/>
            <person name="Gardiner D.M."/>
            <person name="Goff S."/>
            <person name="Hammond-Kosack K.E."/>
            <person name="Hilburn K."/>
            <person name="Hua-Van A."/>
            <person name="Jonkers W."/>
            <person name="Kazan K."/>
            <person name="Kodira C.D."/>
            <person name="Koehrsen M."/>
            <person name="Kumar L."/>
            <person name="Lee Y.-H."/>
            <person name="Li L."/>
            <person name="Manners J.M."/>
            <person name="Miranda-Saavedra D."/>
            <person name="Mukherjee M."/>
            <person name="Park G."/>
            <person name="Park J."/>
            <person name="Park S.-Y."/>
            <person name="Proctor R.H."/>
            <person name="Regev A."/>
            <person name="Ruiz-Roldan M.C."/>
            <person name="Sain D."/>
            <person name="Sakthikumar S."/>
            <person name="Sykes S."/>
            <person name="Schwartz D.C."/>
            <person name="Turgeon B.G."/>
            <person name="Wapinski I."/>
            <person name="Yoder O."/>
            <person name="Young S."/>
            <person name="Zeng Q."/>
            <person name="Zhou S."/>
            <person name="Galagan J."/>
            <person name="Cuomo C.A."/>
            <person name="Kistler H.C."/>
            <person name="Rep M."/>
        </authorList>
    </citation>
    <scope>NUCLEOTIDE SEQUENCE [LARGE SCALE GENOMIC DNA]</scope>
    <source>
        <strain>M3125 / FGSC 7600</strain>
    </source>
</reference>
<reference key="2">
    <citation type="journal article" date="2007" name="ChemBioChem">
        <title>Synthesis of [1,2-13C2, 15N]-L-homoserine and its incorporation by the PKS-NRPS system of Fusarium moniliforme into the mycotoxin fusarin C.</title>
        <authorList>
            <person name="Rees D.O."/>
            <person name="Bushby N."/>
            <person name="Cox R.J."/>
            <person name="Harding J.R."/>
            <person name="Simpson T.J."/>
            <person name="Willis C.L."/>
        </authorList>
    </citation>
    <scope>FUNCTION</scope>
</reference>
<reference key="3">
    <citation type="journal article" date="2012" name="Fungal Genet. Biol.">
        <title>Identification of gene clusters associated with fusaric acid, fusarin, and perithecial pigment production in Fusarium verticillioides.</title>
        <authorList>
            <person name="Brown D.W."/>
            <person name="Butchko R.A."/>
            <person name="Busman M."/>
            <person name="Proctor R.H."/>
        </authorList>
    </citation>
    <scope>FUNCTION</scope>
</reference>
<sequence>MESTPLQYPLGLKTDSLVKQVSEVLKSLTVTKAVGAFIVLFIIIPKVFDFLRNLFSPVTSIPGPLINKFSPWPLEIATFKGKSHRFARALHRKYGPIVVLAPGMISIGDSKEIKRIIQSEDWVKSEAIYGNFRQDFHRPTLLAFTEKKAYSRRKRMLSSMFGIRYIRSLEPLMKSCVDAGVAHLNKLCDNPSKSTIINLQHFIHGLAIDTIGVTTFGGSFHVVENGSHPLPSRLKAGMKISAVMQLISWIKYIPFLPKRDPYIEKFTFDIVDKRRKEAGAVKHQDLLQHLVDVCDDSPGSEFRTSDVQDESVILLAAGSETTANAELFTVIQLLKHPEKMKKLIAEVDKWYPPSEPDRATECAYSQTGMTYLQACIDETMRLIPGQATGSPREASKQEVLLGYKIPRGTTVFPNTQEAHLDGSIWEQPEKYIPERWLEIYSRNQTSAMPYWPFSAGSRICVGKNFAFQEMHISLTTLLRKFTFEYVPGQDETTVFRIAQQLEADSYKVRVKKRF</sequence>
<evidence type="ECO:0000250" key="1">
    <source>
        <dbReference type="UniProtKB" id="P04798"/>
    </source>
</evidence>
<evidence type="ECO:0000250" key="2">
    <source>
        <dbReference type="UniProtKB" id="S0EE84"/>
    </source>
</evidence>
<evidence type="ECO:0000255" key="3"/>
<evidence type="ECO:0000255" key="4">
    <source>
        <dbReference type="PROSITE-ProRule" id="PRU00498"/>
    </source>
</evidence>
<evidence type="ECO:0000269" key="5">
    <source>
    </source>
</evidence>
<evidence type="ECO:0000269" key="6">
    <source>
    </source>
</evidence>
<evidence type="ECO:0000303" key="7">
    <source>
    </source>
</evidence>
<evidence type="ECO:0000305" key="8"/>
<evidence type="ECO:0000305" key="9">
    <source>
    </source>
</evidence>
<gene>
    <name evidence="7" type="primary">FUS8</name>
    <name type="ORF">FVEG_11079</name>
</gene>
<protein>
    <recommendedName>
        <fullName evidence="7">Cytochrome P450 monooxygenase FUS8</fullName>
        <ecNumber evidence="2">1.-.-.-</ecNumber>
    </recommendedName>
    <alternativeName>
        <fullName evidence="7">Fusarin biosynthesis protein 8</fullName>
    </alternativeName>
</protein>
<organism>
    <name type="scientific">Gibberella moniliformis (strain M3125 / FGSC 7600)</name>
    <name type="common">Maize ear and stalk rot fungus</name>
    <name type="synonym">Fusarium verticillioides</name>
    <dbReference type="NCBI Taxonomy" id="334819"/>
    <lineage>
        <taxon>Eukaryota</taxon>
        <taxon>Fungi</taxon>
        <taxon>Dikarya</taxon>
        <taxon>Ascomycota</taxon>
        <taxon>Pezizomycotina</taxon>
        <taxon>Sordariomycetes</taxon>
        <taxon>Hypocreomycetidae</taxon>
        <taxon>Hypocreales</taxon>
        <taxon>Nectriaceae</taxon>
        <taxon>Fusarium</taxon>
        <taxon>Fusarium fujikuroi species complex</taxon>
    </lineage>
</organism>